<evidence type="ECO:0000255" key="1">
    <source>
        <dbReference type="PROSITE-ProRule" id="PRU00303"/>
    </source>
</evidence>
<evidence type="ECO:0000269" key="2">
    <source>
    </source>
</evidence>
<evidence type="ECO:0000305" key="3"/>
<feature type="signal peptide" evidence="1">
    <location>
        <begin position="1"/>
        <end position="17"/>
    </location>
</feature>
<feature type="chain" id="PRO_0000032624" description="Hexagonally packed intermediate-layer surface protein">
    <location>
        <begin position="18"/>
        <end position="1036"/>
    </location>
</feature>
<feature type="disulfide bond" evidence="2">
    <location>
        <begin position="74"/>
        <end position="86"/>
    </location>
</feature>
<feature type="disulfide bond" evidence="3">
    <location>
        <begin position="256"/>
        <end position="275"/>
    </location>
</feature>
<feature type="disulfide bond" evidence="2">
    <location>
        <begin position="642"/>
        <end position="754"/>
    </location>
</feature>
<dbReference type="EMBL" id="M17895">
    <property type="protein sequence ID" value="AAA23335.1"/>
    <property type="molecule type" value="Genomic_DNA"/>
</dbReference>
<dbReference type="PIR" id="A29832">
    <property type="entry name" value="A29832"/>
</dbReference>
<dbReference type="SMR" id="P13126"/>
<dbReference type="GO" id="GO:0005576">
    <property type="term" value="C:extracellular region"/>
    <property type="evidence" value="ECO:0007669"/>
    <property type="project" value="UniProtKB-KW"/>
</dbReference>
<dbReference type="GO" id="GO:0030115">
    <property type="term" value="C:S-layer"/>
    <property type="evidence" value="ECO:0007669"/>
    <property type="project" value="UniProtKB-SubCell"/>
</dbReference>
<dbReference type="GO" id="GO:0071555">
    <property type="term" value="P:cell wall organization"/>
    <property type="evidence" value="ECO:0007669"/>
    <property type="project" value="UniProtKB-KW"/>
</dbReference>
<dbReference type="Gene3D" id="2.60.40.10">
    <property type="entry name" value="Immunoglobulins"/>
    <property type="match status" value="1"/>
</dbReference>
<dbReference type="InterPro" id="IPR013783">
    <property type="entry name" value="Ig-like_fold"/>
</dbReference>
<dbReference type="PROSITE" id="PS51257">
    <property type="entry name" value="PROKAR_LIPOPROTEIN"/>
    <property type="match status" value="1"/>
</dbReference>
<gene>
    <name type="primary">hpi</name>
</gene>
<protein>
    <recommendedName>
        <fullName>Hexagonally packed intermediate-layer surface protein</fullName>
    </recommendedName>
</protein>
<reference key="1">
    <citation type="journal article" date="1987" name="J. Bacteriol.">
        <title>Nucleotide sequence analysis of the gene encoding the Deinococcus radiodurans surface protein, derived amino acid sequence, and complementary protein chemical studies.</title>
        <authorList>
            <person name="Peters J."/>
            <person name="Peters M."/>
            <person name="Lottspeich F."/>
            <person name="Schaefer W."/>
            <person name="Baumeister W."/>
        </authorList>
    </citation>
    <scope>NUCLEOTIDE SEQUENCE [GENOMIC DNA]</scope>
    <scope>PARTIAL PROTEIN SEQUENCE</scope>
    <source>
        <strain>Sark</strain>
    </source>
</reference>
<name>HPI_DEIRD</name>
<organism>
    <name type="scientific">Deinococcus radiodurans</name>
    <dbReference type="NCBI Taxonomy" id="1299"/>
    <lineage>
        <taxon>Bacteria</taxon>
        <taxon>Thermotogati</taxon>
        <taxon>Deinococcota</taxon>
        <taxon>Deinococci</taxon>
        <taxon>Deinococcales</taxon>
        <taxon>Deinococcaceae</taxon>
        <taxon>Deinococcus</taxon>
    </lineage>
</organism>
<proteinExistence type="evidence at protein level"/>
<keyword id="KW-0134">Cell wall</keyword>
<keyword id="KW-0961">Cell wall biogenesis/degradation</keyword>
<keyword id="KW-0903">Direct protein sequencing</keyword>
<keyword id="KW-1015">Disulfide bond</keyword>
<keyword id="KW-0325">Glycoprotein</keyword>
<keyword id="KW-0449">Lipoprotein</keyword>
<keyword id="KW-0701">S-layer</keyword>
<keyword id="KW-0964">Secreted</keyword>
<keyword id="KW-0732">Signal</keyword>
<accession>P13126</accession>
<sequence>MKKNIALMALTGVLTLASCGQNGNTPTADTTAPTVSLSVNNANLPSGVGSVVLSGTVNEASTVVVKNNAGTTVCTVEVAASGTFTCPATTIAGNTSTTSTSTSYTATATDAAKNVGTSSVVTVNVAGVSNPAPTTAVLTIDLAGVSSAPITIKDANGNVVQGYDNVTVNDNATITVARGVYTVTAGNVSGFNGPTTNFRVDLSGGNQTVTLNYTQAGTTTPTPVGSINILTPAVGTSVTGGSTVRVTFDKANEVQCMVGGAAAVTAQVDSTSGYCDVVVPNSTGNVVITVMGKGVNGQTVTATRNISVTQAAVSYGVVTPAGDQELTLTSEGIVRDADSGWRRLGQGVSTPSDPNLNLDIYIKGTVNFSVNAPAGQKVELFLARTTGSDVPTNDDIQAGDVLRSVASTSGTETFSLDSRRLAEFDGVRKWIVVRINGTQVTYQPVIADNKGPQQPDPELNGVQNAYSNILNNYNNSGLTYVRGPVNVFTSNPSLQDREFGQAPVGSSFVQRRPAGFESIRYYLVPESAFNNKALQESDEMLRAKAVKSVATVVSAPVLEPGTVKATSFSRVIGSGATSTVAPKALDNVTYRVYAISRDQVGNETASATYDLVRFDNVGPTITGSVIRDTSDLPFPSQEPERCLSDIATISLGGIADNVGGVGLNPGQGLTFTLGGRQIQAGQFDTNQLADPEYTIGFNSLTDALGNPVVTAPTNAKVYIDNTDPTVNFNRAVMQGTYASGGRVSVESDASDGGCGVYETRLFWDTANGVVDDATTTPAIGHPVQFARQRVTDGAKADSLNAGWNALQLPNGAGAVYLRSLVVDRAGNATISTTSIVVNAKITNQARPLLGGFDAFKRNASAQFVGDDNVIAGVNGTAATPNVTGNSALDNILSLDSVGTLTTNAYLPRGATETAITEKIRNVGAYGRFDATQWNLIRDYQLNTDPTLRSAYVNAGNLANQRGNNWRIRTPWVELGSSDTANTQQKFDFNSDLLNDFYYGRTFGNNHSVNLFSYDQFNGVVSDTAGAYSFYGETVRK</sequence>
<comment type="function">
    <text>Shape maintenance, possible protection from noxious enzymes or exogenous and unsettling DNA, and may mediate homotypic cell-cell contacts.</text>
</comment>
<comment type="subcellular location">
    <subcellularLocation>
        <location>Secreted</location>
        <location>Cell wall</location>
        <location>S-layer</location>
    </subcellularLocation>
    <text>This bacterium is covered by a S-layer with hexagonal symmetry.</text>
</comment>
<comment type="PTM">
    <text>Glycosylated; contains six glycans.</text>
</comment>
<comment type="PTM">
    <text>Acylated in the N-terminal region.</text>
</comment>
<comment type="PTM">
    <text>The N-terminus is blocked.</text>
</comment>
<comment type="miscellaneous">
    <text>The hydrophilic C-terminal region rich in aromatic amino acids could be engaged in interactions with nucleic acids, and the bound fatty acids and the N-terminal region could serve to anchor the layer to the outer membrane of D.radiodurans. The HPI layer contains about 30% beta structure and virtually no alpha helix.</text>
</comment>